<gene>
    <name type="primary">RAB11D</name>
</gene>
<comment type="subcellular location">
    <subcellularLocation>
        <location evidence="3">Cell membrane</location>
        <topology evidence="3">Lipid-anchor</topology>
        <orientation evidence="3">Cytoplasmic side</orientation>
    </subcellularLocation>
</comment>
<comment type="similarity">
    <text evidence="3">Belongs to the small GTPase superfamily. Rab family.</text>
</comment>
<feature type="chain" id="PRO_0000121178" description="Ras-related protein Rab11D">
    <location>
        <begin position="1"/>
        <end position="222"/>
    </location>
</feature>
<feature type="short sequence motif" description="Effector region" evidence="2">
    <location>
        <begin position="44"/>
        <end position="52"/>
    </location>
</feature>
<feature type="binding site" evidence="1">
    <location>
        <begin position="22"/>
        <end position="29"/>
    </location>
    <ligand>
        <name>GTP</name>
        <dbReference type="ChEBI" id="CHEBI:37565"/>
    </ligand>
</feature>
<feature type="binding site" evidence="1">
    <location>
        <begin position="70"/>
        <end position="74"/>
    </location>
    <ligand>
        <name>GTP</name>
        <dbReference type="ChEBI" id="CHEBI:37565"/>
    </ligand>
</feature>
<feature type="binding site" evidence="1">
    <location>
        <begin position="128"/>
        <end position="131"/>
    </location>
    <ligand>
        <name>GTP</name>
        <dbReference type="ChEBI" id="CHEBI:37565"/>
    </ligand>
</feature>
<feature type="lipid moiety-binding region" description="S-geranylgeranyl cysteine" evidence="1">
    <location>
        <position position="219"/>
    </location>
</feature>
<feature type="lipid moiety-binding region" description="S-geranylgeranyl cysteine" evidence="1">
    <location>
        <position position="220"/>
    </location>
</feature>
<sequence>MASGYGDASQKIDYVFKVVLIGDSAVGKSQILARFARNEFSLDSKATIGVEFQTRTLAIQHKSVKAQIWDTAGQERYRAVTSAYYRGAVGAMLVYDITKRQTFDHIPRWLEELRAHADRNIVIMLIGNKTDLEDQRAVPTEDAKEFAQKEGLFFLETSAMEATNLEDAFLTVLTEIFNIVNKKNLAADDNQSNGNPASLTGKKILVPGPGQVIPEKKACCSS</sequence>
<dbReference type="EMBL" id="L29270">
    <property type="protein sequence ID" value="AAA74114.1"/>
    <property type="molecule type" value="mRNA"/>
</dbReference>
<dbReference type="PIR" id="T03622">
    <property type="entry name" value="T03622"/>
</dbReference>
<dbReference type="RefSeq" id="NP_001311834.1">
    <property type="nucleotide sequence ID" value="NM_001324905.1"/>
</dbReference>
<dbReference type="SMR" id="Q40522"/>
<dbReference type="STRING" id="4097.Q40522"/>
<dbReference type="PaxDb" id="4097-Q40522"/>
<dbReference type="GeneID" id="107766135"/>
<dbReference type="KEGG" id="nta:107766135"/>
<dbReference type="OrthoDB" id="9989112at2759"/>
<dbReference type="Proteomes" id="UP000084051">
    <property type="component" value="Unplaced"/>
</dbReference>
<dbReference type="GO" id="GO:0005768">
    <property type="term" value="C:endosome"/>
    <property type="evidence" value="ECO:0000318"/>
    <property type="project" value="GO_Central"/>
</dbReference>
<dbReference type="GO" id="GO:0005794">
    <property type="term" value="C:Golgi apparatus"/>
    <property type="evidence" value="ECO:0000318"/>
    <property type="project" value="GO_Central"/>
</dbReference>
<dbReference type="GO" id="GO:0005886">
    <property type="term" value="C:plasma membrane"/>
    <property type="evidence" value="ECO:0007669"/>
    <property type="project" value="UniProtKB-SubCell"/>
</dbReference>
<dbReference type="GO" id="GO:0005525">
    <property type="term" value="F:GTP binding"/>
    <property type="evidence" value="ECO:0000318"/>
    <property type="project" value="GO_Central"/>
</dbReference>
<dbReference type="GO" id="GO:0003924">
    <property type="term" value="F:GTPase activity"/>
    <property type="evidence" value="ECO:0000318"/>
    <property type="project" value="GO_Central"/>
</dbReference>
<dbReference type="CDD" id="cd01868">
    <property type="entry name" value="Rab11_like"/>
    <property type="match status" value="1"/>
</dbReference>
<dbReference type="FunFam" id="3.40.50.300:FF:000274">
    <property type="entry name" value="ras-related protein RABA5a"/>
    <property type="match status" value="1"/>
</dbReference>
<dbReference type="Gene3D" id="3.40.50.300">
    <property type="entry name" value="P-loop containing nucleotide triphosphate hydrolases"/>
    <property type="match status" value="1"/>
</dbReference>
<dbReference type="InterPro" id="IPR027417">
    <property type="entry name" value="P-loop_NTPase"/>
</dbReference>
<dbReference type="InterPro" id="IPR050209">
    <property type="entry name" value="Rab_GTPases_membrane_traffic"/>
</dbReference>
<dbReference type="InterPro" id="IPR005225">
    <property type="entry name" value="Small_GTP-bd"/>
</dbReference>
<dbReference type="InterPro" id="IPR001806">
    <property type="entry name" value="Small_GTPase"/>
</dbReference>
<dbReference type="NCBIfam" id="TIGR00231">
    <property type="entry name" value="small_GTP"/>
    <property type="match status" value="1"/>
</dbReference>
<dbReference type="PANTHER" id="PTHR47979">
    <property type="entry name" value="DRAB11-RELATED"/>
    <property type="match status" value="1"/>
</dbReference>
<dbReference type="Pfam" id="PF00071">
    <property type="entry name" value="Ras"/>
    <property type="match status" value="1"/>
</dbReference>
<dbReference type="PRINTS" id="PR00449">
    <property type="entry name" value="RASTRNSFRMNG"/>
</dbReference>
<dbReference type="SMART" id="SM00177">
    <property type="entry name" value="ARF"/>
    <property type="match status" value="1"/>
</dbReference>
<dbReference type="SMART" id="SM00175">
    <property type="entry name" value="RAB"/>
    <property type="match status" value="1"/>
</dbReference>
<dbReference type="SMART" id="SM00176">
    <property type="entry name" value="RAN"/>
    <property type="match status" value="1"/>
</dbReference>
<dbReference type="SMART" id="SM00173">
    <property type="entry name" value="RAS"/>
    <property type="match status" value="1"/>
</dbReference>
<dbReference type="SMART" id="SM00174">
    <property type="entry name" value="RHO"/>
    <property type="match status" value="1"/>
</dbReference>
<dbReference type="SUPFAM" id="SSF52540">
    <property type="entry name" value="P-loop containing nucleoside triphosphate hydrolases"/>
    <property type="match status" value="1"/>
</dbReference>
<dbReference type="PROSITE" id="PS51419">
    <property type="entry name" value="RAB"/>
    <property type="match status" value="1"/>
</dbReference>
<accession>Q40522</accession>
<protein>
    <recommendedName>
        <fullName>Ras-related protein Rab11D</fullName>
    </recommendedName>
</protein>
<organism>
    <name type="scientific">Nicotiana tabacum</name>
    <name type="common">Common tobacco</name>
    <dbReference type="NCBI Taxonomy" id="4097"/>
    <lineage>
        <taxon>Eukaryota</taxon>
        <taxon>Viridiplantae</taxon>
        <taxon>Streptophyta</taxon>
        <taxon>Embryophyta</taxon>
        <taxon>Tracheophyta</taxon>
        <taxon>Spermatophyta</taxon>
        <taxon>Magnoliopsida</taxon>
        <taxon>eudicotyledons</taxon>
        <taxon>Gunneridae</taxon>
        <taxon>Pentapetalae</taxon>
        <taxon>asterids</taxon>
        <taxon>lamiids</taxon>
        <taxon>Solanales</taxon>
        <taxon>Solanaceae</taxon>
        <taxon>Nicotianoideae</taxon>
        <taxon>Nicotianeae</taxon>
        <taxon>Nicotiana</taxon>
    </lineage>
</organism>
<evidence type="ECO:0000250" key="1"/>
<evidence type="ECO:0000255" key="2"/>
<evidence type="ECO:0000305" key="3"/>
<proteinExistence type="evidence at transcript level"/>
<keyword id="KW-1003">Cell membrane</keyword>
<keyword id="KW-0342">GTP-binding</keyword>
<keyword id="KW-0449">Lipoprotein</keyword>
<keyword id="KW-0472">Membrane</keyword>
<keyword id="KW-0547">Nucleotide-binding</keyword>
<keyword id="KW-0636">Prenylation</keyword>
<keyword id="KW-1185">Reference proteome</keyword>
<name>RB11D_TOBAC</name>
<reference key="1">
    <citation type="journal article" date="1995" name="Plant Physiol.">
        <title>Characterization of membrane-bound small GTP-binding proteins from Nicotiana tabacum.</title>
        <authorList>
            <person name="Haizel T."/>
            <person name="Merkle T."/>
            <person name="Turck F."/>
            <person name="Nagy F."/>
        </authorList>
    </citation>
    <scope>NUCLEOTIDE SEQUENCE [MRNA]</scope>
    <source>
        <strain>cv. SR1</strain>
    </source>
</reference>